<gene>
    <name type="primary">yitT</name>
    <name type="synonym">yuxA</name>
    <name type="ordered locus">BSU11120</name>
</gene>
<keyword id="KW-1003">Cell membrane</keyword>
<keyword id="KW-0472">Membrane</keyword>
<keyword id="KW-1185">Reference proteome</keyword>
<keyword id="KW-0812">Transmembrane</keyword>
<keyword id="KW-1133">Transmembrane helix</keyword>
<accession>P39803</accession>
<accession>O08139</accession>
<accession>P70946</accession>
<reference key="1">
    <citation type="journal article" date="1993" name="J. Bacteriol.">
        <title>Characterization of the gene encoding an intracellular proteinase inhibitor of Bacillus subtilis and its role in regulation of the major intracellular proteinase.</title>
        <authorList>
            <person name="Shiga Y."/>
            <person name="Yamagata H."/>
            <person name="Udaka S."/>
        </authorList>
    </citation>
    <scope>NUCLEOTIDE SEQUENCE [GENOMIC DNA]</scope>
    <source>
        <strain>168 / DB104</strain>
    </source>
</reference>
<reference key="2">
    <citation type="journal article" date="1997" name="Microbiology">
        <title>A 10.3 kbp segment from nprB to argJ at the 102 degrees region of the Bacillus subtilis chromosome.</title>
        <authorList>
            <person name="Levine A."/>
            <person name="Vannier F."/>
            <person name="Roche B."/>
            <person name="Autret S."/>
            <person name="Mavel D."/>
            <person name="Seror S.J."/>
        </authorList>
    </citation>
    <scope>NUCLEOTIDE SEQUENCE [GENOMIC DNA]</scope>
    <source>
        <strain>168</strain>
    </source>
</reference>
<reference key="3">
    <citation type="journal article" date="1997" name="Microbiology">
        <title>Sequencing of regions downstream of addA (98 degrees) and citG (289 degrees) in Bacillus subtilis.</title>
        <authorList>
            <person name="Medina N."/>
            <person name="Vannier F."/>
            <person name="Roche B."/>
            <person name="Autret S."/>
            <person name="Levine A."/>
            <person name="Seror S.J."/>
        </authorList>
    </citation>
    <scope>NUCLEOTIDE SEQUENCE [GENOMIC DNA]</scope>
</reference>
<reference key="4">
    <citation type="journal article" date="1997" name="Nature">
        <title>The complete genome sequence of the Gram-positive bacterium Bacillus subtilis.</title>
        <authorList>
            <person name="Kunst F."/>
            <person name="Ogasawara N."/>
            <person name="Moszer I."/>
            <person name="Albertini A.M."/>
            <person name="Alloni G."/>
            <person name="Azevedo V."/>
            <person name="Bertero M.G."/>
            <person name="Bessieres P."/>
            <person name="Bolotin A."/>
            <person name="Borchert S."/>
            <person name="Borriss R."/>
            <person name="Boursier L."/>
            <person name="Brans A."/>
            <person name="Braun M."/>
            <person name="Brignell S.C."/>
            <person name="Bron S."/>
            <person name="Brouillet S."/>
            <person name="Bruschi C.V."/>
            <person name="Caldwell B."/>
            <person name="Capuano V."/>
            <person name="Carter N.M."/>
            <person name="Choi S.-K."/>
            <person name="Codani J.-J."/>
            <person name="Connerton I.F."/>
            <person name="Cummings N.J."/>
            <person name="Daniel R.A."/>
            <person name="Denizot F."/>
            <person name="Devine K.M."/>
            <person name="Duesterhoeft A."/>
            <person name="Ehrlich S.D."/>
            <person name="Emmerson P.T."/>
            <person name="Entian K.-D."/>
            <person name="Errington J."/>
            <person name="Fabret C."/>
            <person name="Ferrari E."/>
            <person name="Foulger D."/>
            <person name="Fritz C."/>
            <person name="Fujita M."/>
            <person name="Fujita Y."/>
            <person name="Fuma S."/>
            <person name="Galizzi A."/>
            <person name="Galleron N."/>
            <person name="Ghim S.-Y."/>
            <person name="Glaser P."/>
            <person name="Goffeau A."/>
            <person name="Golightly E.J."/>
            <person name="Grandi G."/>
            <person name="Guiseppi G."/>
            <person name="Guy B.J."/>
            <person name="Haga K."/>
            <person name="Haiech J."/>
            <person name="Harwood C.R."/>
            <person name="Henaut A."/>
            <person name="Hilbert H."/>
            <person name="Holsappel S."/>
            <person name="Hosono S."/>
            <person name="Hullo M.-F."/>
            <person name="Itaya M."/>
            <person name="Jones L.-M."/>
            <person name="Joris B."/>
            <person name="Karamata D."/>
            <person name="Kasahara Y."/>
            <person name="Klaerr-Blanchard M."/>
            <person name="Klein C."/>
            <person name="Kobayashi Y."/>
            <person name="Koetter P."/>
            <person name="Koningstein G."/>
            <person name="Krogh S."/>
            <person name="Kumano M."/>
            <person name="Kurita K."/>
            <person name="Lapidus A."/>
            <person name="Lardinois S."/>
            <person name="Lauber J."/>
            <person name="Lazarevic V."/>
            <person name="Lee S.-M."/>
            <person name="Levine A."/>
            <person name="Liu H."/>
            <person name="Masuda S."/>
            <person name="Mauel C."/>
            <person name="Medigue C."/>
            <person name="Medina N."/>
            <person name="Mellado R.P."/>
            <person name="Mizuno M."/>
            <person name="Moestl D."/>
            <person name="Nakai S."/>
            <person name="Noback M."/>
            <person name="Noone D."/>
            <person name="O'Reilly M."/>
            <person name="Ogawa K."/>
            <person name="Ogiwara A."/>
            <person name="Oudega B."/>
            <person name="Park S.-H."/>
            <person name="Parro V."/>
            <person name="Pohl T.M."/>
            <person name="Portetelle D."/>
            <person name="Porwollik S."/>
            <person name="Prescott A.M."/>
            <person name="Presecan E."/>
            <person name="Pujic P."/>
            <person name="Purnelle B."/>
            <person name="Rapoport G."/>
            <person name="Rey M."/>
            <person name="Reynolds S."/>
            <person name="Rieger M."/>
            <person name="Rivolta C."/>
            <person name="Rocha E."/>
            <person name="Roche B."/>
            <person name="Rose M."/>
            <person name="Sadaie Y."/>
            <person name="Sato T."/>
            <person name="Scanlan E."/>
            <person name="Schleich S."/>
            <person name="Schroeter R."/>
            <person name="Scoffone F."/>
            <person name="Sekiguchi J."/>
            <person name="Sekowska A."/>
            <person name="Seror S.J."/>
            <person name="Serror P."/>
            <person name="Shin B.-S."/>
            <person name="Soldo B."/>
            <person name="Sorokin A."/>
            <person name="Tacconi E."/>
            <person name="Takagi T."/>
            <person name="Takahashi H."/>
            <person name="Takemaru K."/>
            <person name="Takeuchi M."/>
            <person name="Tamakoshi A."/>
            <person name="Tanaka T."/>
            <person name="Terpstra P."/>
            <person name="Tognoni A."/>
            <person name="Tosato V."/>
            <person name="Uchiyama S."/>
            <person name="Vandenbol M."/>
            <person name="Vannier F."/>
            <person name="Vassarotti A."/>
            <person name="Viari A."/>
            <person name="Wambutt R."/>
            <person name="Wedler E."/>
            <person name="Wedler H."/>
            <person name="Weitzenegger T."/>
            <person name="Winters P."/>
            <person name="Wipat A."/>
            <person name="Yamamoto H."/>
            <person name="Yamane K."/>
            <person name="Yasumoto K."/>
            <person name="Yata K."/>
            <person name="Yoshida K."/>
            <person name="Yoshikawa H.-F."/>
            <person name="Zumstein E."/>
            <person name="Yoshikawa H."/>
            <person name="Danchin A."/>
        </authorList>
    </citation>
    <scope>NUCLEOTIDE SEQUENCE [LARGE SCALE GENOMIC DNA]</scope>
    <source>
        <strain>168</strain>
    </source>
</reference>
<name>YITT_BACSU</name>
<protein>
    <recommendedName>
        <fullName>UPF0750 membrane protein YitT</fullName>
    </recommendedName>
</protein>
<feature type="chain" id="PRO_0000049590" description="UPF0750 membrane protein YitT">
    <location>
        <begin position="1"/>
        <end position="280"/>
    </location>
</feature>
<feature type="transmembrane region" description="Helical" evidence="1">
    <location>
        <begin position="9"/>
        <end position="29"/>
    </location>
</feature>
<feature type="transmembrane region" description="Helical" evidence="1">
    <location>
        <begin position="54"/>
        <end position="74"/>
    </location>
</feature>
<feature type="transmembrane region" description="Helical" evidence="1">
    <location>
        <begin position="80"/>
        <end position="100"/>
    </location>
</feature>
<feature type="transmembrane region" description="Helical" evidence="1">
    <location>
        <begin position="151"/>
        <end position="171"/>
    </location>
</feature>
<feature type="sequence conflict" description="In Ref. 1; BAA03818." evidence="2" ref="1">
    <original>V</original>
    <variation>D</variation>
    <location>
        <position position="121"/>
    </location>
</feature>
<feature type="sequence conflict" description="In Ref. 1; BAA03818." evidence="2" ref="1">
    <original>V</original>
    <variation>L</variation>
    <location>
        <position position="226"/>
    </location>
</feature>
<feature type="sequence conflict" description="In Ref. 1; BAA03818." evidence="2" ref="1">
    <original>R</original>
    <variation>T</variation>
    <location>
        <position position="278"/>
    </location>
</feature>
<dbReference type="EMBL" id="D16311">
    <property type="protein sequence ID" value="BAA03818.1"/>
    <property type="molecule type" value="Genomic_DNA"/>
</dbReference>
<dbReference type="EMBL" id="Y09476">
    <property type="protein sequence ID" value="CAA70630.1"/>
    <property type="molecule type" value="Genomic_DNA"/>
</dbReference>
<dbReference type="EMBL" id="Z79580">
    <property type="protein sequence ID" value="CAB01834.1"/>
    <property type="molecule type" value="Genomic_DNA"/>
</dbReference>
<dbReference type="EMBL" id="AL009126">
    <property type="protein sequence ID" value="CAB12952.1"/>
    <property type="molecule type" value="Genomic_DNA"/>
</dbReference>
<dbReference type="PIR" id="A49921">
    <property type="entry name" value="A49921"/>
</dbReference>
<dbReference type="RefSeq" id="NP_388993.1">
    <property type="nucleotide sequence ID" value="NC_000964.3"/>
</dbReference>
<dbReference type="RefSeq" id="WP_003245017.1">
    <property type="nucleotide sequence ID" value="NZ_OZ025638.1"/>
</dbReference>
<dbReference type="SMR" id="P39803"/>
<dbReference type="FunCoup" id="P39803">
    <property type="interactions" value="10"/>
</dbReference>
<dbReference type="STRING" id="224308.BSU11120"/>
<dbReference type="TCDB" id="2.A.115.1.1">
    <property type="family name" value="the novobiocin exporter (nbce) family"/>
</dbReference>
<dbReference type="PaxDb" id="224308-BSU11120"/>
<dbReference type="EnsemblBacteria" id="CAB12952">
    <property type="protein sequence ID" value="CAB12952"/>
    <property type="gene ID" value="BSU_11120"/>
</dbReference>
<dbReference type="GeneID" id="939346"/>
<dbReference type="KEGG" id="bsu:BSU11120"/>
<dbReference type="PATRIC" id="fig|224308.179.peg.1194"/>
<dbReference type="eggNOG" id="COG1284">
    <property type="taxonomic scope" value="Bacteria"/>
</dbReference>
<dbReference type="InParanoid" id="P39803"/>
<dbReference type="OrthoDB" id="2417289at2"/>
<dbReference type="PhylomeDB" id="P39803"/>
<dbReference type="BioCyc" id="BSUB:BSU11120-MONOMER"/>
<dbReference type="Proteomes" id="UP000001570">
    <property type="component" value="Chromosome"/>
</dbReference>
<dbReference type="GO" id="GO:0005886">
    <property type="term" value="C:plasma membrane"/>
    <property type="evidence" value="ECO:0007669"/>
    <property type="project" value="UniProtKB-SubCell"/>
</dbReference>
<dbReference type="CDD" id="cd16380">
    <property type="entry name" value="YitT_C"/>
    <property type="match status" value="1"/>
</dbReference>
<dbReference type="Gene3D" id="3.30.70.120">
    <property type="match status" value="1"/>
</dbReference>
<dbReference type="InterPro" id="IPR019264">
    <property type="entry name" value="DUF2179"/>
</dbReference>
<dbReference type="InterPro" id="IPR015867">
    <property type="entry name" value="N-reg_PII/ATP_PRibTrfase_C"/>
</dbReference>
<dbReference type="InterPro" id="IPR051461">
    <property type="entry name" value="UPF0750_membrane"/>
</dbReference>
<dbReference type="InterPro" id="IPR003740">
    <property type="entry name" value="YitT"/>
</dbReference>
<dbReference type="PANTHER" id="PTHR33545:SF5">
    <property type="entry name" value="UPF0750 MEMBRANE PROTEIN YITT"/>
    <property type="match status" value="1"/>
</dbReference>
<dbReference type="PANTHER" id="PTHR33545">
    <property type="entry name" value="UPF0750 MEMBRANE PROTEIN YITT-RELATED"/>
    <property type="match status" value="1"/>
</dbReference>
<dbReference type="Pfam" id="PF10035">
    <property type="entry name" value="DUF2179"/>
    <property type="match status" value="1"/>
</dbReference>
<dbReference type="Pfam" id="PF02588">
    <property type="entry name" value="YitT_membrane"/>
    <property type="match status" value="1"/>
</dbReference>
<dbReference type="PIRSF" id="PIRSF006483">
    <property type="entry name" value="Membrane_protein_YitT"/>
    <property type="match status" value="1"/>
</dbReference>
<organism>
    <name type="scientific">Bacillus subtilis (strain 168)</name>
    <dbReference type="NCBI Taxonomy" id="224308"/>
    <lineage>
        <taxon>Bacteria</taxon>
        <taxon>Bacillati</taxon>
        <taxon>Bacillota</taxon>
        <taxon>Bacilli</taxon>
        <taxon>Bacillales</taxon>
        <taxon>Bacillaceae</taxon>
        <taxon>Bacillus</taxon>
    </lineage>
</organism>
<comment type="subcellular location">
    <subcellularLocation>
        <location evidence="2">Cell membrane</location>
        <topology evidence="2">Multi-pass membrane protein</topology>
    </subcellularLocation>
</comment>
<comment type="similarity">
    <text evidence="2">Belongs to the UPF0750 family.</text>
</comment>
<evidence type="ECO:0000255" key="1"/>
<evidence type="ECO:0000305" key="2"/>
<sequence length="280" mass="30535">MVLDQTKKLLIVIIGALLNAAGLNLFLIPADVYASGFTGVAQLLSSVVDQYAPFYISTGTLLFLLNIPVGILGWLKVGKSFTVYSILSVALTTLFMGILPETSLSHDILLNAVFGGVISAVGIGLTLKYGASTGGLDIVAMVLAKWKDKPVGTYFFILNGIIILTAGLLQGWEKALYTLVTLYVTTRVIDAIHTRHMKLTAMIVTKKADEIKEAIYGKMVRGITTVPAKGAFTNEQKEMMIIVITRYELYDLEKIVKEVDPKAFTNIVQTTGIFGFFRKD</sequence>
<proteinExistence type="inferred from homology"/>